<keyword id="KW-0067">ATP-binding</keyword>
<keyword id="KW-0143">Chaperone</keyword>
<keyword id="KW-0963">Cytoplasm</keyword>
<keyword id="KW-0547">Nucleotide-binding</keyword>
<keyword id="KW-0346">Stress response</keyword>
<reference key="1">
    <citation type="journal article" date="1997" name="Genetics">
        <title>Gene flow and natural selection in the origin of Drosophila pseudoobscura and close relatives.</title>
        <authorList>
            <person name="Wang R.L."/>
            <person name="Wakeley J."/>
            <person name="Hey J."/>
        </authorList>
    </citation>
    <scope>NUCLEOTIDE SEQUENCE [GENOMIC DNA]</scope>
    <source>
        <strain>Miranda22</strain>
        <strain>Miranda23</strain>
        <strain>Miranda24</strain>
        <strain>Miranda25</strain>
    </source>
</reference>
<proteinExistence type="inferred from homology"/>
<evidence type="ECO:0000250" key="1"/>
<evidence type="ECO:0000256" key="2">
    <source>
        <dbReference type="SAM" id="MobiDB-lite"/>
    </source>
</evidence>
<evidence type="ECO:0000305" key="3"/>
<name>HSP83_DROMI</name>
<organism>
    <name type="scientific">Drosophila miranda</name>
    <name type="common">Fruit fly</name>
    <dbReference type="NCBI Taxonomy" id="7229"/>
    <lineage>
        <taxon>Eukaryota</taxon>
        <taxon>Metazoa</taxon>
        <taxon>Ecdysozoa</taxon>
        <taxon>Arthropoda</taxon>
        <taxon>Hexapoda</taxon>
        <taxon>Insecta</taxon>
        <taxon>Pterygota</taxon>
        <taxon>Neoptera</taxon>
        <taxon>Endopterygota</taxon>
        <taxon>Diptera</taxon>
        <taxon>Brachycera</taxon>
        <taxon>Muscomorpha</taxon>
        <taxon>Ephydroidea</taxon>
        <taxon>Drosophilidae</taxon>
        <taxon>Drosophila</taxon>
        <taxon>Sophophora</taxon>
    </lineage>
</organism>
<feature type="chain" id="PRO_0000062931" description="Heat shock protein 83">
    <location>
        <begin position="1"/>
        <end position="269" status="greater than"/>
    </location>
</feature>
<feature type="region of interest" description="Disordered" evidence="2">
    <location>
        <begin position="213"/>
        <end position="269"/>
    </location>
</feature>
<feature type="compositionally biased region" description="Basic and acidic residues" evidence="2">
    <location>
        <begin position="225"/>
        <end position="245"/>
    </location>
</feature>
<feature type="compositionally biased region" description="Basic residues" evidence="2">
    <location>
        <begin position="260"/>
        <end position="269"/>
    </location>
</feature>
<feature type="binding site" evidence="1">
    <location>
        <position position="39"/>
    </location>
    <ligand>
        <name>ATP</name>
        <dbReference type="ChEBI" id="CHEBI:30616"/>
    </ligand>
</feature>
<feature type="binding site" evidence="1">
    <location>
        <position position="81"/>
    </location>
    <ligand>
        <name>ATP</name>
        <dbReference type="ChEBI" id="CHEBI:30616"/>
    </ligand>
</feature>
<feature type="binding site" evidence="1">
    <location>
        <position position="100"/>
    </location>
    <ligand>
        <name>ATP</name>
        <dbReference type="ChEBI" id="CHEBI:30616"/>
    </ligand>
</feature>
<feature type="binding site" evidence="1">
    <location>
        <position position="126"/>
    </location>
    <ligand>
        <name>ATP</name>
        <dbReference type="ChEBI" id="CHEBI:30616"/>
    </ligand>
</feature>
<feature type="non-terminal residue">
    <location>
        <position position="269"/>
    </location>
</feature>
<protein>
    <recommendedName>
        <fullName>Heat shock protein 83</fullName>
    </recommendedName>
    <alternativeName>
        <fullName>HSP 82</fullName>
    </alternativeName>
</protein>
<comment type="function">
    <text evidence="1">Molecular chaperone that promotes the maturation, structural maintenance and proper regulation of specific target proteins involved for instance in cell cycle control and signal transduction. Undergoes a functional cycle that is linked to its ATPase activity. This cycle probably induces conformational changes in the client proteins, thereby causing their activation. Interacts dynamically with various co-chaperones that modulate its substrate recognition, ATPase cycle and chaperone function. Required for piRNA biogenesis by facilitating loading of piRNAs into PIWI proteins (By similarity).</text>
</comment>
<comment type="subunit">
    <text evidence="1">Homodimer. Interacts with shu (By similarity).</text>
</comment>
<comment type="subcellular location">
    <subcellularLocation>
        <location>Cytoplasm</location>
    </subcellularLocation>
</comment>
<comment type="similarity">
    <text evidence="3">Belongs to the heat shock protein 90 family.</text>
</comment>
<sequence length="269" mass="30103">MPEEAETFAFQAEIAQLMSLIINTFYSNKEIFLRELISNASDALDKIRYESLTDPSKLDSGKELYIKLIPNKTAGTLTIIDTGIGMTKSDLVNNLGTIAKSGTKAFMEALQAGADISMIGQFGVGFYSAYLIADRVTVTSKNNDDEQYVWESSAGGSFTVKADNSEPLGRGTKIXLYIKEDQTDYLEESKIKEIVNKHSQFIGYPIKLLVEKEREKEVSDDEADDEKKDDEAKKDMDTDEPKIEDVGEDEDADKKDKDGKKKKTIKEKY</sequence>
<gene>
    <name type="primary">Hsp83</name>
    <name type="synonym">Hsp82</name>
</gene>
<accession>O16087</accession>
<accession>O16088</accession>
<accession>O16089</accession>
<accession>O16090</accession>
<dbReference type="EMBL" id="AF006560">
    <property type="protein sequence ID" value="AAC07945.1"/>
    <property type="molecule type" value="Genomic_DNA"/>
</dbReference>
<dbReference type="EMBL" id="AF006561">
    <property type="protein sequence ID" value="AAC07946.1"/>
    <property type="molecule type" value="Genomic_DNA"/>
</dbReference>
<dbReference type="EMBL" id="AF006562">
    <property type="protein sequence ID" value="AAC07947.1"/>
    <property type="molecule type" value="Genomic_DNA"/>
</dbReference>
<dbReference type="EMBL" id="AF006563">
    <property type="protein sequence ID" value="AAC07948.1"/>
    <property type="molecule type" value="Genomic_DNA"/>
</dbReference>
<dbReference type="GO" id="GO:0005737">
    <property type="term" value="C:cytoplasm"/>
    <property type="evidence" value="ECO:0007669"/>
    <property type="project" value="UniProtKB-SubCell"/>
</dbReference>
<dbReference type="GO" id="GO:0005524">
    <property type="term" value="F:ATP binding"/>
    <property type="evidence" value="ECO:0007669"/>
    <property type="project" value="UniProtKB-KW"/>
</dbReference>
<dbReference type="GO" id="GO:0016887">
    <property type="term" value="F:ATP hydrolysis activity"/>
    <property type="evidence" value="ECO:0007669"/>
    <property type="project" value="InterPro"/>
</dbReference>
<dbReference type="GO" id="GO:0140662">
    <property type="term" value="F:ATP-dependent protein folding chaperone"/>
    <property type="evidence" value="ECO:0007669"/>
    <property type="project" value="InterPro"/>
</dbReference>
<dbReference type="GO" id="GO:0051082">
    <property type="term" value="F:unfolded protein binding"/>
    <property type="evidence" value="ECO:0007669"/>
    <property type="project" value="InterPro"/>
</dbReference>
<dbReference type="CDD" id="cd16927">
    <property type="entry name" value="HATPase_Hsp90-like"/>
    <property type="match status" value="1"/>
</dbReference>
<dbReference type="FunFam" id="3.30.565.10:FF:000001">
    <property type="entry name" value="Heat shock protein HSP 90-alpha"/>
    <property type="match status" value="1"/>
</dbReference>
<dbReference type="Gene3D" id="3.30.565.10">
    <property type="entry name" value="Histidine kinase-like ATPase, C-terminal domain"/>
    <property type="match status" value="1"/>
</dbReference>
<dbReference type="InterPro" id="IPR036890">
    <property type="entry name" value="HATPase_C_sf"/>
</dbReference>
<dbReference type="InterPro" id="IPR019805">
    <property type="entry name" value="Heat_shock_protein_90_CS"/>
</dbReference>
<dbReference type="InterPro" id="IPR001404">
    <property type="entry name" value="Hsp90_fam"/>
</dbReference>
<dbReference type="InterPro" id="IPR020575">
    <property type="entry name" value="Hsp90_N"/>
</dbReference>
<dbReference type="PANTHER" id="PTHR11528">
    <property type="entry name" value="HEAT SHOCK PROTEIN 90 FAMILY MEMBER"/>
    <property type="match status" value="1"/>
</dbReference>
<dbReference type="Pfam" id="PF13589">
    <property type="entry name" value="HATPase_c_3"/>
    <property type="match status" value="1"/>
</dbReference>
<dbReference type="Pfam" id="PF00183">
    <property type="entry name" value="HSP90"/>
    <property type="match status" value="1"/>
</dbReference>
<dbReference type="PRINTS" id="PR00775">
    <property type="entry name" value="HEATSHOCK90"/>
</dbReference>
<dbReference type="SMART" id="SM00387">
    <property type="entry name" value="HATPase_c"/>
    <property type="match status" value="1"/>
</dbReference>
<dbReference type="SUPFAM" id="SSF55874">
    <property type="entry name" value="ATPase domain of HSP90 chaperone/DNA topoisomerase II/histidine kinase"/>
    <property type="match status" value="1"/>
</dbReference>
<dbReference type="PROSITE" id="PS00298">
    <property type="entry name" value="HSP90"/>
    <property type="match status" value="1"/>
</dbReference>